<dbReference type="EMBL" id="CH477622">
    <property type="protein sequence ID" value="EAT38179.1"/>
    <property type="molecule type" value="Genomic_DNA"/>
</dbReference>
<dbReference type="RefSeq" id="XP_001654108.1">
    <property type="nucleotide sequence ID" value="XM_001654058.1"/>
</dbReference>
<dbReference type="SMR" id="Q16UF8"/>
<dbReference type="FunCoup" id="Q16UF8">
    <property type="interactions" value="2662"/>
</dbReference>
<dbReference type="STRING" id="7159.Q16UF8"/>
<dbReference type="PaxDb" id="7159-AAEL009902-PA"/>
<dbReference type="VEuPathDB" id="VectorBase:AAEL023347"/>
<dbReference type="eggNOG" id="KOG2479">
    <property type="taxonomic scope" value="Eukaryota"/>
</dbReference>
<dbReference type="HOGENOM" id="CLU_024521_2_0_1"/>
<dbReference type="InParanoid" id="Q16UF8"/>
<dbReference type="OMA" id="FMDKRDN"/>
<dbReference type="PhylomeDB" id="Q16UF8"/>
<dbReference type="Proteomes" id="UP000008820">
    <property type="component" value="Chromosome 1"/>
</dbReference>
<dbReference type="Proteomes" id="UP000682892">
    <property type="component" value="Unassembled WGS sequence"/>
</dbReference>
<dbReference type="GO" id="GO:0016282">
    <property type="term" value="C:eukaryotic 43S preinitiation complex"/>
    <property type="evidence" value="ECO:0007669"/>
    <property type="project" value="UniProtKB-UniRule"/>
</dbReference>
<dbReference type="GO" id="GO:0033290">
    <property type="term" value="C:eukaryotic 48S preinitiation complex"/>
    <property type="evidence" value="ECO:0007669"/>
    <property type="project" value="UniProtKB-UniRule"/>
</dbReference>
<dbReference type="GO" id="GO:0005852">
    <property type="term" value="C:eukaryotic translation initiation factor 3 complex"/>
    <property type="evidence" value="ECO:0007669"/>
    <property type="project" value="UniProtKB-UniRule"/>
</dbReference>
<dbReference type="GO" id="GO:0098808">
    <property type="term" value="F:mRNA cap binding"/>
    <property type="evidence" value="ECO:0007669"/>
    <property type="project" value="UniProtKB-UniRule"/>
</dbReference>
<dbReference type="GO" id="GO:0003743">
    <property type="term" value="F:translation initiation factor activity"/>
    <property type="evidence" value="ECO:0007669"/>
    <property type="project" value="UniProtKB-UniRule"/>
</dbReference>
<dbReference type="GO" id="GO:0002191">
    <property type="term" value="P:cap-dependent translational initiation"/>
    <property type="evidence" value="ECO:0007669"/>
    <property type="project" value="UniProtKB-UniRule"/>
</dbReference>
<dbReference type="GO" id="GO:0001732">
    <property type="term" value="P:formation of cytoplasmic translation initiation complex"/>
    <property type="evidence" value="ECO:0007669"/>
    <property type="project" value="UniProtKB-UniRule"/>
</dbReference>
<dbReference type="HAMAP" id="MF_03003">
    <property type="entry name" value="eIF3d"/>
    <property type="match status" value="1"/>
</dbReference>
<dbReference type="InterPro" id="IPR007783">
    <property type="entry name" value="eIF3d"/>
</dbReference>
<dbReference type="PANTHER" id="PTHR12399">
    <property type="entry name" value="EUKARYOTIC TRANSLATION INITIATION FACTOR 3 SUBUNIT 7"/>
    <property type="match status" value="1"/>
</dbReference>
<dbReference type="PANTHER" id="PTHR12399:SF0">
    <property type="entry name" value="EUKARYOTIC TRANSLATION INITIATION FACTOR 3 SUBUNIT D"/>
    <property type="match status" value="1"/>
</dbReference>
<dbReference type="Pfam" id="PF05091">
    <property type="entry name" value="eIF-3_zeta"/>
    <property type="match status" value="1"/>
</dbReference>
<dbReference type="PIRSF" id="PIRSF016281">
    <property type="entry name" value="EIF-3_zeta"/>
    <property type="match status" value="1"/>
</dbReference>
<evidence type="ECO:0000250" key="1">
    <source>
        <dbReference type="UniProtKB" id="K7IM66"/>
    </source>
</evidence>
<evidence type="ECO:0000255" key="2">
    <source>
        <dbReference type="HAMAP-Rule" id="MF_03003"/>
    </source>
</evidence>
<evidence type="ECO:0000256" key="3">
    <source>
        <dbReference type="SAM" id="MobiDB-lite"/>
    </source>
</evidence>
<sequence>MNETIACTPESAVFEAPQLQFNEEGWGPCELPDAFKDIPYQPFSKSDRLGKISDWTGTAQTDKKYPNKYASQFGGGNQYAYYHEEDETTFHLVDSARIQKQPHQRGRFRGNLRNQRGRGRGGRGGVQAGGMTTLSKNATKGRDQRRGTTRKWGARPPPKIRDASVAVRPDWVTVEEMDFPRLSKLSLPNVEKGEDITTCGTLEYYDKTYDRVNVKNEKPLQRVDRIFHTVTTTDDPVIRLLSKSHGNVYATDAILATIMCCTRSNYSWDIVIEKIGDKLFMDKRDNTEFDLLTVNETAIEPPNEDGNSLNSPRNLAIEATFINHNFSQQVLKSGEKEPKYKFDQPNPFIGDDEDGEVASVAYRYRKWDLNNGIELVARCEHDAVLLTPQGDTQFLTIKALNEWDSKVANGVEWRQKLDTQRGAVLANELRNNSCKLAKWTVQALLAGSDQIKFGYVSRAHVRDSSRHVILGTQQFKPQEFANQINLSMDNAWGILRCIIDICMKQKDGKYLIMKDPNKPMIRLYDIPDNTFESDGEEEEGDDGEAFQTYAYGPSAATTAAATAAANAATAAAAVAAAAAAAAAAATTTPAATETVATATTEATTPTTATKTTAPAAAQK</sequence>
<organism>
    <name type="scientific">Aedes aegypti</name>
    <name type="common">Yellowfever mosquito</name>
    <name type="synonym">Culex aegypti</name>
    <dbReference type="NCBI Taxonomy" id="7159"/>
    <lineage>
        <taxon>Eukaryota</taxon>
        <taxon>Metazoa</taxon>
        <taxon>Ecdysozoa</taxon>
        <taxon>Arthropoda</taxon>
        <taxon>Hexapoda</taxon>
        <taxon>Insecta</taxon>
        <taxon>Pterygota</taxon>
        <taxon>Neoptera</taxon>
        <taxon>Endopterygota</taxon>
        <taxon>Diptera</taxon>
        <taxon>Nematocera</taxon>
        <taxon>Culicoidea</taxon>
        <taxon>Culicidae</taxon>
        <taxon>Culicinae</taxon>
        <taxon>Aedini</taxon>
        <taxon>Aedes</taxon>
        <taxon>Stegomyia</taxon>
    </lineage>
</organism>
<accession>Q16UF8</accession>
<name>EIF3D_AEDAE</name>
<feature type="chain" id="PRO_0000364138" description="Eukaryotic translation initiation factor 3 subunit D">
    <location>
        <begin position="1"/>
        <end position="619"/>
    </location>
</feature>
<feature type="region of interest" description="Disordered" evidence="3">
    <location>
        <begin position="99"/>
        <end position="160"/>
    </location>
</feature>
<feature type="region of interest" description="RNA gate" evidence="1">
    <location>
        <begin position="288"/>
        <end position="302"/>
    </location>
</feature>
<feature type="region of interest" description="Disordered" evidence="3">
    <location>
        <begin position="588"/>
        <end position="619"/>
    </location>
</feature>
<feature type="compositionally biased region" description="Basic residues" evidence="3">
    <location>
        <begin position="100"/>
        <end position="121"/>
    </location>
</feature>
<protein>
    <recommendedName>
        <fullName evidence="2">Eukaryotic translation initiation factor 3 subunit D</fullName>
        <shortName evidence="2">eIF3d</shortName>
    </recommendedName>
    <alternativeName>
        <fullName evidence="2">Eukaryotic translation initiation factor 3 subunit 7</fullName>
    </alternativeName>
</protein>
<keyword id="KW-0963">Cytoplasm</keyword>
<keyword id="KW-0396">Initiation factor</keyword>
<keyword id="KW-0648">Protein biosynthesis</keyword>
<keyword id="KW-1185">Reference proteome</keyword>
<keyword id="KW-0694">RNA-binding</keyword>
<reference key="1">
    <citation type="journal article" date="2007" name="Science">
        <title>Genome sequence of Aedes aegypti, a major arbovirus vector.</title>
        <authorList>
            <person name="Nene V."/>
            <person name="Wortman J.R."/>
            <person name="Lawson D."/>
            <person name="Haas B.J."/>
            <person name="Kodira C.D."/>
            <person name="Tu Z.J."/>
            <person name="Loftus B.J."/>
            <person name="Xi Z."/>
            <person name="Megy K."/>
            <person name="Grabherr M."/>
            <person name="Ren Q."/>
            <person name="Zdobnov E.M."/>
            <person name="Lobo N.F."/>
            <person name="Campbell K.S."/>
            <person name="Brown S.E."/>
            <person name="Bonaldo M.F."/>
            <person name="Zhu J."/>
            <person name="Sinkins S.P."/>
            <person name="Hogenkamp D.G."/>
            <person name="Amedeo P."/>
            <person name="Arensburger P."/>
            <person name="Atkinson P.W."/>
            <person name="Bidwell S.L."/>
            <person name="Biedler J."/>
            <person name="Birney E."/>
            <person name="Bruggner R.V."/>
            <person name="Costas J."/>
            <person name="Coy M.R."/>
            <person name="Crabtree J."/>
            <person name="Crawford M."/>
            <person name="DeBruyn B."/>
            <person name="DeCaprio D."/>
            <person name="Eiglmeier K."/>
            <person name="Eisenstadt E."/>
            <person name="El-Dorry H."/>
            <person name="Gelbart W.M."/>
            <person name="Gomes S.L."/>
            <person name="Hammond M."/>
            <person name="Hannick L.I."/>
            <person name="Hogan J.R."/>
            <person name="Holmes M.H."/>
            <person name="Jaffe D."/>
            <person name="Johnston S.J."/>
            <person name="Kennedy R.C."/>
            <person name="Koo H."/>
            <person name="Kravitz S."/>
            <person name="Kriventseva E.V."/>
            <person name="Kulp D."/>
            <person name="Labutti K."/>
            <person name="Lee E."/>
            <person name="Li S."/>
            <person name="Lovin D.D."/>
            <person name="Mao C."/>
            <person name="Mauceli E."/>
            <person name="Menck C.F."/>
            <person name="Miller J.R."/>
            <person name="Montgomery P."/>
            <person name="Mori A."/>
            <person name="Nascimento A.L."/>
            <person name="Naveira H.F."/>
            <person name="Nusbaum C."/>
            <person name="O'Leary S.B."/>
            <person name="Orvis J."/>
            <person name="Pertea M."/>
            <person name="Quesneville H."/>
            <person name="Reidenbach K.R."/>
            <person name="Rogers Y.-H.C."/>
            <person name="Roth C.W."/>
            <person name="Schneider J.R."/>
            <person name="Schatz M."/>
            <person name="Shumway M."/>
            <person name="Stanke M."/>
            <person name="Stinson E.O."/>
            <person name="Tubio J.M.C."/>
            <person name="Vanzee J.P."/>
            <person name="Verjovski-Almeida S."/>
            <person name="Werner D."/>
            <person name="White O.R."/>
            <person name="Wyder S."/>
            <person name="Zeng Q."/>
            <person name="Zhao Q."/>
            <person name="Zhao Y."/>
            <person name="Hill C.A."/>
            <person name="Raikhel A.S."/>
            <person name="Soares M.B."/>
            <person name="Knudson D.L."/>
            <person name="Lee N.H."/>
            <person name="Galagan J."/>
            <person name="Salzberg S.L."/>
            <person name="Paulsen I.T."/>
            <person name="Dimopoulos G."/>
            <person name="Collins F.H."/>
            <person name="Bruce B."/>
            <person name="Fraser-Liggett C.M."/>
            <person name="Severson D.W."/>
        </authorList>
    </citation>
    <scope>NUCLEOTIDE SEQUENCE [LARGE SCALE GENOMIC DNA]</scope>
    <source>
        <strain>LVPib12</strain>
    </source>
</reference>
<gene>
    <name evidence="2" type="primary">eIF3-S7</name>
    <name type="ORF">AAEL009902</name>
</gene>
<proteinExistence type="inferred from homology"/>
<comment type="function">
    <text evidence="2">mRNA cap-binding component of the eukaryotic translation initiation factor 3 (eIF-3) complex, which is involved in protein synthesis of a specialized repertoire of mRNAs and, together with other initiation factors, stimulates binding of mRNA and methionyl-tRNAi to the 40S ribosome. The eIF-3 complex specifically targets and initiates translation of a subset of mRNAs involved in cell proliferation. In the eIF-3 complex, eif3d specifically recognizes and binds the 7-methylguanosine cap of a subset of mRNAs.</text>
</comment>
<comment type="subunit">
    <text evidence="2">Component of the eukaryotic translation initiation factor 3 (eIF-3) complex.</text>
</comment>
<comment type="subcellular location">
    <subcellularLocation>
        <location evidence="2">Cytoplasm</location>
    </subcellularLocation>
</comment>
<comment type="domain">
    <text evidence="2">The RNA gate region regulates mRNA cap recognition to prevent promiscuous mRNA-binding before assembly of eif3d into the full eukaryotic translation initiation factor 3 (eIF-3) complex.</text>
</comment>
<comment type="similarity">
    <text evidence="2">Belongs to the eIF-3 subunit D family.</text>
</comment>